<protein>
    <recommendedName>
        <fullName evidence="1">Isoleucine--tRNA ligase</fullName>
        <ecNumber evidence="1">6.1.1.5</ecNumber>
    </recommendedName>
    <alternativeName>
        <fullName evidence="1">Isoleucyl-tRNA synthetase</fullName>
        <shortName evidence="1">IleRS</shortName>
    </alternativeName>
</protein>
<gene>
    <name evidence="1" type="primary">ileS</name>
    <name type="ordered locus">MTBMA_c17620</name>
</gene>
<sequence>MPIQEAEKSYKPHVIEEKVQSFWEERDIYERVKELREEGPRYSFLDGPPYCSGRIHLGTAWNKIMKDSYLRFKSMRGFNVRRQPGWDTHGLPIEHKVEGILGVRSKKDIEDKIGIEEFVRKCREFAMENKAVMTSQFQRLGVWMDWDDPYVTFDPAYMESCWWTLKRAHEKDLLLRDLRVITWCPRCETALALAEIDYHEKEDPSIYVKFPVSGDTYILVWTTTPWTLPANMAVAVHPDFDYAHTRLDGETYIMAEALVEKVLGEEAEIIKTVRGSELEGLTYRHPLDEEVPCHRDMEHRVILGDHVTLTEGTGCVHTAPGHGPEDFEIGKEYGLPVFCPVDEAGVFTEDAGKYRGLFVKDADSDIIDDLRSKNLLLRAETISHRYGFCWRCKTPIIYLATEQWFLKITEIKDKMLSELDRVQWIPSWAGESRFRNWIENARDWTISRQRYWGIPIPIWVCEDCDSIHVVGSIGELRELAVEGQLEGDFIHRPHVDRIILECGRCGGRMKRTPDVLDVWIDSGVAGWAALHYPREKELFSEWFPYDFITEGHDQTRGWFYSQLGCGVIALDETPYRRVLMHGFTLDEEGRKMSKSLGNVVEPEDVIEKYGADVLRFYLLWANKPWEDLKFVWDELKNVNKMFNILWNVYVFATTYMSLDRFQPGDHELEDLHFRDEDRWIISRVNSVALKVTEALDNLHFHRATREIHDFIVEDLSRWYIRLIRSRTWIERDDPDKLAAYHSLYTALKTLIVTLSPIAPHVCEDIYQNLVRGAEPDSPESIHMLDWMVSEDAVDGKLEAEMDIVREIIEACARARDTARYKLRWPVREIVVVSEDDKVLEAAESLKGVIAEQANAKSIRTSTEFPDMRIIAKPNPATLGPKLRQDMPPVMRKLEEADGAEVKAALESEGSFRVDLDGRIIVLEPDDIIFETELPENIVNAQFEGGSVFVDTELTPEIMSEAMARELVRRIQDMRKDLDLDVEARIEVSVKCSPEFRELTEPQREFVENEVRASHLSFDYTELEYTKEWKISDENLIISIKPSDKV</sequence>
<accession>P26499</accession>
<accession>D9PYN2</accession>
<feature type="initiator methionine" description="Removed">
    <location>
        <position position="1"/>
    </location>
</feature>
<feature type="chain" id="PRO_0000098579" description="Isoleucine--tRNA ligase">
    <location>
        <begin position="2"/>
        <end position="1045"/>
    </location>
</feature>
<feature type="short sequence motif" description="'HIGH' region">
    <location>
        <begin position="49"/>
        <end position="59"/>
    </location>
</feature>
<feature type="short sequence motif" description="'KMSKS' region">
    <location>
        <begin position="591"/>
        <end position="595"/>
    </location>
</feature>
<feature type="binding site" evidence="1">
    <location>
        <position position="594"/>
    </location>
    <ligand>
        <name>ATP</name>
        <dbReference type="ChEBI" id="CHEBI:30616"/>
    </ligand>
</feature>
<feature type="mutagenesis site" description="Resistance to mupirocin (pseudomonic acid A).">
    <original>G</original>
    <variation>D</variation>
    <location>
        <position position="589"/>
    </location>
</feature>
<evidence type="ECO:0000255" key="1">
    <source>
        <dbReference type="HAMAP-Rule" id="MF_02003"/>
    </source>
</evidence>
<comment type="function">
    <text evidence="1">Catalyzes the attachment of isoleucine to tRNA(Ile). As IleRS can inadvertently accommodate and process structurally similar amino acids such as valine, to avoid such errors it has two additional distinct tRNA(Ile)-dependent editing activities. One activity is designated as 'pretransfer' editing and involves the hydrolysis of activated Val-AMP. The other activity is designated 'posttransfer' editing and involves deacylation of mischarged Val-tRNA(Ile).</text>
</comment>
<comment type="catalytic activity">
    <reaction evidence="1">
        <text>tRNA(Ile) + L-isoleucine + ATP = L-isoleucyl-tRNA(Ile) + AMP + diphosphate</text>
        <dbReference type="Rhea" id="RHEA:11060"/>
        <dbReference type="Rhea" id="RHEA-COMP:9666"/>
        <dbReference type="Rhea" id="RHEA-COMP:9695"/>
        <dbReference type="ChEBI" id="CHEBI:30616"/>
        <dbReference type="ChEBI" id="CHEBI:33019"/>
        <dbReference type="ChEBI" id="CHEBI:58045"/>
        <dbReference type="ChEBI" id="CHEBI:78442"/>
        <dbReference type="ChEBI" id="CHEBI:78528"/>
        <dbReference type="ChEBI" id="CHEBI:456215"/>
        <dbReference type="EC" id="6.1.1.5"/>
    </reaction>
</comment>
<comment type="cofactor">
    <cofactor evidence="1">
        <name>Zn(2+)</name>
        <dbReference type="ChEBI" id="CHEBI:29105"/>
    </cofactor>
</comment>
<comment type="subunit">
    <text evidence="1">Monomer.</text>
</comment>
<comment type="subcellular location">
    <subcellularLocation>
        <location evidence="1">Cytoplasm</location>
    </subcellularLocation>
</comment>
<comment type="domain">
    <text evidence="1">IleRS has two distinct active sites: one for aminoacylation and one for editing. The misactivated valine is translocated from the active site to the editing site, which sterically excludes the correctly activated isoleucine. The single editing site contains two valyl binding pockets, one specific for each substrate (Val-AMP or Val-tRNA(Ile)).</text>
</comment>
<comment type="similarity">
    <text evidence="1">Belongs to the class-I aminoacyl-tRNA synthetase family. IleS type 2 subfamily.</text>
</comment>
<dbReference type="EC" id="6.1.1.5" evidence="1"/>
<dbReference type="EMBL" id="M59245">
    <property type="protein sequence ID" value="AAA72950.1"/>
    <property type="molecule type" value="Genomic_DNA"/>
</dbReference>
<dbReference type="EMBL" id="CP001710">
    <property type="protein sequence ID" value="ADL59330.1"/>
    <property type="molecule type" value="Genomic_DNA"/>
</dbReference>
<dbReference type="RefSeq" id="WP_013296540.1">
    <property type="nucleotide sequence ID" value="NC_014408.1"/>
</dbReference>
<dbReference type="SMR" id="P26499"/>
<dbReference type="STRING" id="79929.MTBMA_c17620"/>
<dbReference type="PaxDb" id="79929-MTBMA_c17620"/>
<dbReference type="GeneID" id="77400529"/>
<dbReference type="GeneID" id="9705473"/>
<dbReference type="KEGG" id="mmg:MTBMA_c17620"/>
<dbReference type="PATRIC" id="fig|79929.8.peg.1699"/>
<dbReference type="HOGENOM" id="CLU_001493_1_1_2"/>
<dbReference type="OrthoDB" id="30823at2157"/>
<dbReference type="Proteomes" id="UP000000345">
    <property type="component" value="Chromosome"/>
</dbReference>
<dbReference type="GO" id="GO:0005737">
    <property type="term" value="C:cytoplasm"/>
    <property type="evidence" value="ECO:0007669"/>
    <property type="project" value="UniProtKB-SubCell"/>
</dbReference>
<dbReference type="GO" id="GO:0002161">
    <property type="term" value="F:aminoacyl-tRNA deacylase activity"/>
    <property type="evidence" value="ECO:0007669"/>
    <property type="project" value="InterPro"/>
</dbReference>
<dbReference type="GO" id="GO:0005524">
    <property type="term" value="F:ATP binding"/>
    <property type="evidence" value="ECO:0007669"/>
    <property type="project" value="UniProtKB-UniRule"/>
</dbReference>
<dbReference type="GO" id="GO:0004822">
    <property type="term" value="F:isoleucine-tRNA ligase activity"/>
    <property type="evidence" value="ECO:0007669"/>
    <property type="project" value="UniProtKB-UniRule"/>
</dbReference>
<dbReference type="GO" id="GO:0000049">
    <property type="term" value="F:tRNA binding"/>
    <property type="evidence" value="ECO:0007669"/>
    <property type="project" value="InterPro"/>
</dbReference>
<dbReference type="GO" id="GO:0008270">
    <property type="term" value="F:zinc ion binding"/>
    <property type="evidence" value="ECO:0007669"/>
    <property type="project" value="UniProtKB-UniRule"/>
</dbReference>
<dbReference type="GO" id="GO:0006428">
    <property type="term" value="P:isoleucyl-tRNA aminoacylation"/>
    <property type="evidence" value="ECO:0007669"/>
    <property type="project" value="UniProtKB-UniRule"/>
</dbReference>
<dbReference type="CDD" id="cd07961">
    <property type="entry name" value="Anticodon_Ia_Ile_ABEc"/>
    <property type="match status" value="1"/>
</dbReference>
<dbReference type="CDD" id="cd00818">
    <property type="entry name" value="IleRS_core"/>
    <property type="match status" value="1"/>
</dbReference>
<dbReference type="FunFam" id="3.40.50.620:FF:000286">
    <property type="entry name" value="Isoleucine--tRNA ligase"/>
    <property type="match status" value="1"/>
</dbReference>
<dbReference type="FunFam" id="1.10.730.10:FF:000033">
    <property type="entry name" value="Valine--tRNA ligase"/>
    <property type="match status" value="1"/>
</dbReference>
<dbReference type="Gene3D" id="3.40.50.620">
    <property type="entry name" value="HUPs"/>
    <property type="match status" value="2"/>
</dbReference>
<dbReference type="Gene3D" id="1.10.730.10">
    <property type="entry name" value="Isoleucyl-tRNA Synthetase, Domain 1"/>
    <property type="match status" value="1"/>
</dbReference>
<dbReference type="Gene3D" id="3.90.740.10">
    <property type="entry name" value="Valyl/Leucyl/Isoleucyl-tRNA synthetase, editing domain"/>
    <property type="match status" value="1"/>
</dbReference>
<dbReference type="HAMAP" id="MF_02003">
    <property type="entry name" value="Ile_tRNA_synth_type2"/>
    <property type="match status" value="1"/>
</dbReference>
<dbReference type="InterPro" id="IPR001412">
    <property type="entry name" value="aa-tRNA-synth_I_CS"/>
</dbReference>
<dbReference type="InterPro" id="IPR002300">
    <property type="entry name" value="aa-tRNA-synth_Ia"/>
</dbReference>
<dbReference type="InterPro" id="IPR033709">
    <property type="entry name" value="Anticodon_Ile_ABEc"/>
</dbReference>
<dbReference type="InterPro" id="IPR002301">
    <property type="entry name" value="Ile-tRNA-ligase"/>
</dbReference>
<dbReference type="InterPro" id="IPR023586">
    <property type="entry name" value="Ile-tRNA-ligase_type2"/>
</dbReference>
<dbReference type="InterPro" id="IPR013155">
    <property type="entry name" value="M/V/L/I-tRNA-synth_anticd-bd"/>
</dbReference>
<dbReference type="InterPro" id="IPR014729">
    <property type="entry name" value="Rossmann-like_a/b/a_fold"/>
</dbReference>
<dbReference type="InterPro" id="IPR009080">
    <property type="entry name" value="tRNAsynth_Ia_anticodon-bd"/>
</dbReference>
<dbReference type="InterPro" id="IPR009008">
    <property type="entry name" value="Val/Leu/Ile-tRNA-synth_edit"/>
</dbReference>
<dbReference type="NCBIfam" id="TIGR00392">
    <property type="entry name" value="ileS"/>
    <property type="match status" value="1"/>
</dbReference>
<dbReference type="PANTHER" id="PTHR42780:SF1">
    <property type="entry name" value="ISOLEUCINE--TRNA LIGASE, CYTOPLASMIC"/>
    <property type="match status" value="1"/>
</dbReference>
<dbReference type="PANTHER" id="PTHR42780">
    <property type="entry name" value="SOLEUCYL-TRNA SYNTHETASE"/>
    <property type="match status" value="1"/>
</dbReference>
<dbReference type="Pfam" id="PF08264">
    <property type="entry name" value="Anticodon_1"/>
    <property type="match status" value="1"/>
</dbReference>
<dbReference type="Pfam" id="PF19302">
    <property type="entry name" value="DUF5915"/>
    <property type="match status" value="1"/>
</dbReference>
<dbReference type="Pfam" id="PF00133">
    <property type="entry name" value="tRNA-synt_1"/>
    <property type="match status" value="1"/>
</dbReference>
<dbReference type="PRINTS" id="PR00984">
    <property type="entry name" value="TRNASYNTHILE"/>
</dbReference>
<dbReference type="SUPFAM" id="SSF47323">
    <property type="entry name" value="Anticodon-binding domain of a subclass of class I aminoacyl-tRNA synthetases"/>
    <property type="match status" value="1"/>
</dbReference>
<dbReference type="SUPFAM" id="SSF52374">
    <property type="entry name" value="Nucleotidylyl transferase"/>
    <property type="match status" value="1"/>
</dbReference>
<dbReference type="SUPFAM" id="SSF50677">
    <property type="entry name" value="ValRS/IleRS/LeuRS editing domain"/>
    <property type="match status" value="1"/>
</dbReference>
<dbReference type="PROSITE" id="PS00178">
    <property type="entry name" value="AA_TRNA_LIGASE_I"/>
    <property type="match status" value="1"/>
</dbReference>
<keyword id="KW-0030">Aminoacyl-tRNA synthetase</keyword>
<keyword id="KW-0067">ATP-binding</keyword>
<keyword id="KW-0963">Cytoplasm</keyword>
<keyword id="KW-0903">Direct protein sequencing</keyword>
<keyword id="KW-0436">Ligase</keyword>
<keyword id="KW-0479">Metal-binding</keyword>
<keyword id="KW-0547">Nucleotide-binding</keyword>
<keyword id="KW-0648">Protein biosynthesis</keyword>
<keyword id="KW-0862">Zinc</keyword>
<proteinExistence type="evidence at protein level"/>
<organism>
    <name type="scientific">Methanothermobacter marburgensis (strain ATCC BAA-927 / DSM 2133 / JCM 14651 / NBRC 100331 / OCM 82 / Marburg)</name>
    <name type="common">Methanobacterium thermoautotrophicum</name>
    <dbReference type="NCBI Taxonomy" id="79929"/>
    <lineage>
        <taxon>Archaea</taxon>
        <taxon>Methanobacteriati</taxon>
        <taxon>Methanobacteriota</taxon>
        <taxon>Methanomada group</taxon>
        <taxon>Methanobacteria</taxon>
        <taxon>Methanobacteriales</taxon>
        <taxon>Methanobacteriaceae</taxon>
        <taxon>Methanothermobacter</taxon>
    </lineage>
</organism>
<name>SYI_METTM</name>
<reference key="1">
    <citation type="journal article" date="1991" name="J. Biol. Chem.">
        <title>Isoleucyl-tRNA synthetase of Methanobacterium thermoautotrophicum Marburg. Cloning of the gene, nucleotide sequence, and localization of a base change conferring resistance to pseudomonic acid.</title>
        <authorList>
            <person name="Jenal U."/>
            <person name="Rechsteiner T."/>
            <person name="Tan P.-Y."/>
            <person name="Buehlmann E."/>
            <person name="Meile L."/>
            <person name="Leisinger T."/>
        </authorList>
    </citation>
    <scope>NUCLEOTIDE SEQUENCE [GENOMIC DNA]</scope>
    <scope>PARTIAL PROTEIN SEQUENCE</scope>
    <source>
        <strain>ATCC BAA-927 / DSM 2133 / JCM 14651 / NBRC 100331 / OCM 82 / Marburg</strain>
    </source>
</reference>
<reference key="2">
    <citation type="journal article" date="2010" name="J. Bacteriol.">
        <title>Complete genome sequence of Methanothermobacter marburgensis, a methanoarchaeon model organism.</title>
        <authorList>
            <person name="Liesegang H."/>
            <person name="Kaster A.K."/>
            <person name="Wiezer A."/>
            <person name="Goenrich M."/>
            <person name="Wollherr A."/>
            <person name="Seedorf H."/>
            <person name="Gottschalk G."/>
            <person name="Thauer R.K."/>
        </authorList>
    </citation>
    <scope>NUCLEOTIDE SEQUENCE [LARGE SCALE GENOMIC DNA]</scope>
    <source>
        <strain>ATCC BAA-927 / DSM 2133 / JCM 14651 / NBRC 100331 / OCM 82 / Marburg</strain>
    </source>
</reference>